<gene>
    <name evidence="1" type="primary">eno</name>
    <name type="ordered locus">Arth_1147</name>
</gene>
<comment type="function">
    <text evidence="1">Catalyzes the reversible conversion of 2-phosphoglycerate (2-PG) into phosphoenolpyruvate (PEP). It is essential for the degradation of carbohydrates via glycolysis.</text>
</comment>
<comment type="catalytic activity">
    <reaction evidence="1">
        <text>(2R)-2-phosphoglycerate = phosphoenolpyruvate + H2O</text>
        <dbReference type="Rhea" id="RHEA:10164"/>
        <dbReference type="ChEBI" id="CHEBI:15377"/>
        <dbReference type="ChEBI" id="CHEBI:58289"/>
        <dbReference type="ChEBI" id="CHEBI:58702"/>
        <dbReference type="EC" id="4.2.1.11"/>
    </reaction>
</comment>
<comment type="cofactor">
    <cofactor evidence="1">
        <name>Mg(2+)</name>
        <dbReference type="ChEBI" id="CHEBI:18420"/>
    </cofactor>
    <text evidence="1">Binds a second Mg(2+) ion via substrate during catalysis.</text>
</comment>
<comment type="pathway">
    <text evidence="1">Carbohydrate degradation; glycolysis; pyruvate from D-glyceraldehyde 3-phosphate: step 4/5.</text>
</comment>
<comment type="subcellular location">
    <subcellularLocation>
        <location evidence="1">Cytoplasm</location>
    </subcellularLocation>
    <subcellularLocation>
        <location evidence="1">Secreted</location>
    </subcellularLocation>
    <subcellularLocation>
        <location evidence="1">Cell surface</location>
    </subcellularLocation>
    <text evidence="1">Fractions of enolase are present in both the cytoplasm and on the cell surface.</text>
</comment>
<comment type="similarity">
    <text evidence="1">Belongs to the enolase family.</text>
</comment>
<reference key="1">
    <citation type="journal article" date="2013" name="Stand. Genomic Sci.">
        <title>Complete genome sequence of Arthrobacter sp. strain FB24.</title>
        <authorList>
            <person name="Nakatsu C.H."/>
            <person name="Barabote R."/>
            <person name="Thompson S."/>
            <person name="Bruce D."/>
            <person name="Detter C."/>
            <person name="Brettin T."/>
            <person name="Han C."/>
            <person name="Beasley F."/>
            <person name="Chen W."/>
            <person name="Konopka A."/>
            <person name="Xie G."/>
        </authorList>
    </citation>
    <scope>NUCLEOTIDE SEQUENCE [LARGE SCALE GENOMIC DNA]</scope>
    <source>
        <strain>FB24</strain>
    </source>
</reference>
<proteinExistence type="inferred from homology"/>
<sequence length="426" mass="45024">MALIDAIHAREILDSRGNPTVEVEVLLSDGQIGRAAVPSGASTGEHEAVELRDGDKGRYLGKGVQKAVDAVIDQIAPALTGFDATDQRSIDQAMIDLDGTPNKSKLGANAILGVSLAVANAAAASADLPLYKYLGGPNAHVLPVPLMNILNGGSHADSDVDIQEFMIAPIGAETFSEGLRWGVEVYHNLKSVLQAKGLSTGLGDEGGFAPNLPSNRAALDLIQEAIKNAGYIPGKDIALALDVASSEFFKDGAYQFEGKALSATEMSAYYAELVADYPLVSIEDPLDENDWEGWKTLTDAIGDKVQLVGDDLFVTNPSILQRGIDTATANSLLVKVNQIGSLTETLDAVSLAQRAGYTTITSHRSGETEDTTIADIAVATNAGQIKTGAPARSERVAKYNQLLRIEEELDDAARYAGRSAFPRFKG</sequence>
<organism>
    <name type="scientific">Arthrobacter sp. (strain FB24)</name>
    <dbReference type="NCBI Taxonomy" id="290399"/>
    <lineage>
        <taxon>Bacteria</taxon>
        <taxon>Bacillati</taxon>
        <taxon>Actinomycetota</taxon>
        <taxon>Actinomycetes</taxon>
        <taxon>Micrococcales</taxon>
        <taxon>Micrococcaceae</taxon>
        <taxon>Arthrobacter</taxon>
    </lineage>
</organism>
<evidence type="ECO:0000255" key="1">
    <source>
        <dbReference type="HAMAP-Rule" id="MF_00318"/>
    </source>
</evidence>
<accession>A0JU21</accession>
<feature type="chain" id="PRO_0000280833" description="Enolase">
    <location>
        <begin position="1"/>
        <end position="426"/>
    </location>
</feature>
<feature type="active site" description="Proton donor" evidence="1">
    <location>
        <position position="205"/>
    </location>
</feature>
<feature type="active site" description="Proton acceptor" evidence="1">
    <location>
        <position position="335"/>
    </location>
</feature>
<feature type="binding site" evidence="1">
    <location>
        <position position="163"/>
    </location>
    <ligand>
        <name>(2R)-2-phosphoglycerate</name>
        <dbReference type="ChEBI" id="CHEBI:58289"/>
    </ligand>
</feature>
<feature type="binding site" evidence="1">
    <location>
        <position position="242"/>
    </location>
    <ligand>
        <name>Mg(2+)</name>
        <dbReference type="ChEBI" id="CHEBI:18420"/>
    </ligand>
</feature>
<feature type="binding site" evidence="1">
    <location>
        <position position="283"/>
    </location>
    <ligand>
        <name>Mg(2+)</name>
        <dbReference type="ChEBI" id="CHEBI:18420"/>
    </ligand>
</feature>
<feature type="binding site" evidence="1">
    <location>
        <position position="310"/>
    </location>
    <ligand>
        <name>Mg(2+)</name>
        <dbReference type="ChEBI" id="CHEBI:18420"/>
    </ligand>
</feature>
<feature type="binding site" evidence="1">
    <location>
        <position position="335"/>
    </location>
    <ligand>
        <name>(2R)-2-phosphoglycerate</name>
        <dbReference type="ChEBI" id="CHEBI:58289"/>
    </ligand>
</feature>
<feature type="binding site" evidence="1">
    <location>
        <position position="364"/>
    </location>
    <ligand>
        <name>(2R)-2-phosphoglycerate</name>
        <dbReference type="ChEBI" id="CHEBI:58289"/>
    </ligand>
</feature>
<feature type="binding site" evidence="1">
    <location>
        <position position="365"/>
    </location>
    <ligand>
        <name>(2R)-2-phosphoglycerate</name>
        <dbReference type="ChEBI" id="CHEBI:58289"/>
    </ligand>
</feature>
<feature type="binding site" evidence="1">
    <location>
        <position position="386"/>
    </location>
    <ligand>
        <name>(2R)-2-phosphoglycerate</name>
        <dbReference type="ChEBI" id="CHEBI:58289"/>
    </ligand>
</feature>
<keyword id="KW-0963">Cytoplasm</keyword>
<keyword id="KW-0324">Glycolysis</keyword>
<keyword id="KW-0456">Lyase</keyword>
<keyword id="KW-0460">Magnesium</keyword>
<keyword id="KW-0479">Metal-binding</keyword>
<keyword id="KW-1185">Reference proteome</keyword>
<keyword id="KW-0964">Secreted</keyword>
<dbReference type="EC" id="4.2.1.11" evidence="1"/>
<dbReference type="EMBL" id="CP000454">
    <property type="protein sequence ID" value="ABK02541.1"/>
    <property type="molecule type" value="Genomic_DNA"/>
</dbReference>
<dbReference type="RefSeq" id="WP_011691008.1">
    <property type="nucleotide sequence ID" value="NC_008541.1"/>
</dbReference>
<dbReference type="SMR" id="A0JU21"/>
<dbReference type="STRING" id="290399.Arth_1147"/>
<dbReference type="KEGG" id="art:Arth_1147"/>
<dbReference type="eggNOG" id="COG0148">
    <property type="taxonomic scope" value="Bacteria"/>
</dbReference>
<dbReference type="HOGENOM" id="CLU_031223_2_1_11"/>
<dbReference type="OrthoDB" id="9804716at2"/>
<dbReference type="UniPathway" id="UPA00109">
    <property type="reaction ID" value="UER00187"/>
</dbReference>
<dbReference type="Proteomes" id="UP000000754">
    <property type="component" value="Chromosome"/>
</dbReference>
<dbReference type="GO" id="GO:0009986">
    <property type="term" value="C:cell surface"/>
    <property type="evidence" value="ECO:0007669"/>
    <property type="project" value="UniProtKB-SubCell"/>
</dbReference>
<dbReference type="GO" id="GO:0005576">
    <property type="term" value="C:extracellular region"/>
    <property type="evidence" value="ECO:0007669"/>
    <property type="project" value="UniProtKB-SubCell"/>
</dbReference>
<dbReference type="GO" id="GO:0000015">
    <property type="term" value="C:phosphopyruvate hydratase complex"/>
    <property type="evidence" value="ECO:0007669"/>
    <property type="project" value="InterPro"/>
</dbReference>
<dbReference type="GO" id="GO:0000287">
    <property type="term" value="F:magnesium ion binding"/>
    <property type="evidence" value="ECO:0007669"/>
    <property type="project" value="UniProtKB-UniRule"/>
</dbReference>
<dbReference type="GO" id="GO:0004634">
    <property type="term" value="F:phosphopyruvate hydratase activity"/>
    <property type="evidence" value="ECO:0007669"/>
    <property type="project" value="UniProtKB-UniRule"/>
</dbReference>
<dbReference type="GO" id="GO:0006096">
    <property type="term" value="P:glycolytic process"/>
    <property type="evidence" value="ECO:0007669"/>
    <property type="project" value="UniProtKB-UniRule"/>
</dbReference>
<dbReference type="CDD" id="cd03313">
    <property type="entry name" value="enolase"/>
    <property type="match status" value="1"/>
</dbReference>
<dbReference type="FunFam" id="3.20.20.120:FF:000001">
    <property type="entry name" value="Enolase"/>
    <property type="match status" value="1"/>
</dbReference>
<dbReference type="FunFam" id="3.30.390.10:FF:000001">
    <property type="entry name" value="Enolase"/>
    <property type="match status" value="1"/>
</dbReference>
<dbReference type="Gene3D" id="3.20.20.120">
    <property type="entry name" value="Enolase-like C-terminal domain"/>
    <property type="match status" value="1"/>
</dbReference>
<dbReference type="Gene3D" id="3.30.390.10">
    <property type="entry name" value="Enolase-like, N-terminal domain"/>
    <property type="match status" value="1"/>
</dbReference>
<dbReference type="HAMAP" id="MF_00318">
    <property type="entry name" value="Enolase"/>
    <property type="match status" value="1"/>
</dbReference>
<dbReference type="InterPro" id="IPR000941">
    <property type="entry name" value="Enolase"/>
</dbReference>
<dbReference type="InterPro" id="IPR036849">
    <property type="entry name" value="Enolase-like_C_sf"/>
</dbReference>
<dbReference type="InterPro" id="IPR029017">
    <property type="entry name" value="Enolase-like_N"/>
</dbReference>
<dbReference type="InterPro" id="IPR020810">
    <property type="entry name" value="Enolase_C"/>
</dbReference>
<dbReference type="InterPro" id="IPR020809">
    <property type="entry name" value="Enolase_CS"/>
</dbReference>
<dbReference type="InterPro" id="IPR020811">
    <property type="entry name" value="Enolase_N"/>
</dbReference>
<dbReference type="NCBIfam" id="TIGR01060">
    <property type="entry name" value="eno"/>
    <property type="match status" value="1"/>
</dbReference>
<dbReference type="PANTHER" id="PTHR11902">
    <property type="entry name" value="ENOLASE"/>
    <property type="match status" value="1"/>
</dbReference>
<dbReference type="PANTHER" id="PTHR11902:SF1">
    <property type="entry name" value="ENOLASE"/>
    <property type="match status" value="1"/>
</dbReference>
<dbReference type="Pfam" id="PF00113">
    <property type="entry name" value="Enolase_C"/>
    <property type="match status" value="1"/>
</dbReference>
<dbReference type="Pfam" id="PF03952">
    <property type="entry name" value="Enolase_N"/>
    <property type="match status" value="1"/>
</dbReference>
<dbReference type="PIRSF" id="PIRSF001400">
    <property type="entry name" value="Enolase"/>
    <property type="match status" value="1"/>
</dbReference>
<dbReference type="PRINTS" id="PR00148">
    <property type="entry name" value="ENOLASE"/>
</dbReference>
<dbReference type="SFLD" id="SFLDS00001">
    <property type="entry name" value="Enolase"/>
    <property type="match status" value="1"/>
</dbReference>
<dbReference type="SFLD" id="SFLDF00002">
    <property type="entry name" value="enolase"/>
    <property type="match status" value="1"/>
</dbReference>
<dbReference type="SMART" id="SM01192">
    <property type="entry name" value="Enolase_C"/>
    <property type="match status" value="1"/>
</dbReference>
<dbReference type="SMART" id="SM01193">
    <property type="entry name" value="Enolase_N"/>
    <property type="match status" value="1"/>
</dbReference>
<dbReference type="SUPFAM" id="SSF51604">
    <property type="entry name" value="Enolase C-terminal domain-like"/>
    <property type="match status" value="1"/>
</dbReference>
<dbReference type="SUPFAM" id="SSF54826">
    <property type="entry name" value="Enolase N-terminal domain-like"/>
    <property type="match status" value="1"/>
</dbReference>
<dbReference type="PROSITE" id="PS00164">
    <property type="entry name" value="ENOLASE"/>
    <property type="match status" value="1"/>
</dbReference>
<name>ENO_ARTS2</name>
<protein>
    <recommendedName>
        <fullName evidence="1">Enolase</fullName>
        <ecNumber evidence="1">4.2.1.11</ecNumber>
    </recommendedName>
    <alternativeName>
        <fullName evidence="1">2-phospho-D-glycerate hydro-lyase</fullName>
    </alternativeName>
    <alternativeName>
        <fullName evidence="1">2-phosphoglycerate dehydratase</fullName>
    </alternativeName>
</protein>